<proteinExistence type="evidence at protein level"/>
<feature type="chain" id="PRO_0000248387" description="Ribonuclease H2 subunit C">
    <location>
        <begin position="1"/>
        <end position="110"/>
    </location>
</feature>
<feature type="region of interest" description="Disordered" evidence="1">
    <location>
        <begin position="45"/>
        <end position="69"/>
    </location>
</feature>
<feature type="compositionally biased region" description="Low complexity" evidence="1">
    <location>
        <begin position="51"/>
        <end position="66"/>
    </location>
</feature>
<feature type="sequence conflict" description="In Ref. 4; AAS56535." evidence="4" ref="4">
    <original>F</original>
    <variation>L</variation>
    <location>
        <position position="64"/>
    </location>
</feature>
<dbReference type="EMBL" id="S79456">
    <property type="protein sequence ID" value="AAB35144.1"/>
    <property type="molecule type" value="Genomic_DNA"/>
</dbReference>
<dbReference type="EMBL" id="Z73326">
    <property type="protein sequence ID" value="CAA97726.1"/>
    <property type="molecule type" value="Genomic_DNA"/>
</dbReference>
<dbReference type="EMBL" id="U53879">
    <property type="protein sequence ID" value="AAB82388.1"/>
    <property type="molecule type" value="Genomic_DNA"/>
</dbReference>
<dbReference type="EMBL" id="AY558209">
    <property type="protein sequence ID" value="AAS56535.1"/>
    <property type="molecule type" value="Genomic_DNA"/>
</dbReference>
<dbReference type="EMBL" id="BK006945">
    <property type="protein sequence ID" value="DAA09465.1"/>
    <property type="molecule type" value="Genomic_DNA"/>
</dbReference>
<dbReference type="PIR" id="S65003">
    <property type="entry name" value="S65003"/>
</dbReference>
<dbReference type="RefSeq" id="NP_013255.1">
    <property type="nucleotide sequence ID" value="NM_001182041.1"/>
</dbReference>
<dbReference type="BioGRID" id="31423">
    <property type="interactions" value="118"/>
</dbReference>
<dbReference type="ComplexPortal" id="CPX-1720">
    <property type="entry name" value="RNase H2 complex"/>
</dbReference>
<dbReference type="DIP" id="DIP-1839N"/>
<dbReference type="FunCoup" id="Q12338">
    <property type="interactions" value="87"/>
</dbReference>
<dbReference type="IntAct" id="Q12338">
    <property type="interactions" value="4"/>
</dbReference>
<dbReference type="MINT" id="Q12338"/>
<dbReference type="STRING" id="4932.YLR154C"/>
<dbReference type="iPTMnet" id="Q12338"/>
<dbReference type="PaxDb" id="4932-YLR154C"/>
<dbReference type="PeptideAtlas" id="Q12338"/>
<dbReference type="EnsemblFungi" id="YLR154C_mRNA">
    <property type="protein sequence ID" value="YLR154C"/>
    <property type="gene ID" value="YLR154C"/>
</dbReference>
<dbReference type="GeneID" id="850847"/>
<dbReference type="KEGG" id="sce:YLR154C"/>
<dbReference type="AGR" id="SGD:S000004144"/>
<dbReference type="SGD" id="S000004144">
    <property type="gene designation" value="RNH203"/>
</dbReference>
<dbReference type="VEuPathDB" id="FungiDB:YLR154C"/>
<dbReference type="HOGENOM" id="CLU_2185453_0_0_1"/>
<dbReference type="InParanoid" id="Q12338"/>
<dbReference type="OrthoDB" id="4041556at2759"/>
<dbReference type="BioCyc" id="YEAST:G3O-32288-MONOMER"/>
<dbReference type="BioGRID-ORCS" id="850847">
    <property type="hits" value="0 hits in 10 CRISPR screens"/>
</dbReference>
<dbReference type="PRO" id="PR:Q12338"/>
<dbReference type="Proteomes" id="UP000002311">
    <property type="component" value="Chromosome XII"/>
</dbReference>
<dbReference type="RNAct" id="Q12338">
    <property type="molecule type" value="protein"/>
</dbReference>
<dbReference type="GO" id="GO:0005737">
    <property type="term" value="C:cytoplasm"/>
    <property type="evidence" value="ECO:0007005"/>
    <property type="project" value="SGD"/>
</dbReference>
<dbReference type="GO" id="GO:0005634">
    <property type="term" value="C:nucleus"/>
    <property type="evidence" value="ECO:0007005"/>
    <property type="project" value="SGD"/>
</dbReference>
<dbReference type="GO" id="GO:0032299">
    <property type="term" value="C:ribonuclease H2 complex"/>
    <property type="evidence" value="ECO:0000314"/>
    <property type="project" value="SGD"/>
</dbReference>
<dbReference type="GO" id="GO:0006298">
    <property type="term" value="P:mismatch repair"/>
    <property type="evidence" value="ECO:0000303"/>
    <property type="project" value="ComplexPortal"/>
</dbReference>
<dbReference type="GO" id="GO:0006401">
    <property type="term" value="P:RNA catabolic process"/>
    <property type="evidence" value="ECO:0000314"/>
    <property type="project" value="SGD"/>
</dbReference>
<organism>
    <name type="scientific">Saccharomyces cerevisiae (strain ATCC 204508 / S288c)</name>
    <name type="common">Baker's yeast</name>
    <dbReference type="NCBI Taxonomy" id="559292"/>
    <lineage>
        <taxon>Eukaryota</taxon>
        <taxon>Fungi</taxon>
        <taxon>Dikarya</taxon>
        <taxon>Ascomycota</taxon>
        <taxon>Saccharomycotina</taxon>
        <taxon>Saccharomycetes</taxon>
        <taxon>Saccharomycetales</taxon>
        <taxon>Saccharomycetaceae</taxon>
        <taxon>Saccharomyces</taxon>
    </lineage>
</organism>
<name>RNH2C_YEAST</name>
<evidence type="ECO:0000256" key="1">
    <source>
        <dbReference type="SAM" id="MobiDB-lite"/>
    </source>
</evidence>
<evidence type="ECO:0000269" key="2">
    <source>
    </source>
</evidence>
<evidence type="ECO:0000269" key="3">
    <source>
    </source>
</evidence>
<evidence type="ECO:0000305" key="4"/>
<keyword id="KW-0963">Cytoplasm</keyword>
<keyword id="KW-0903">Direct protein sequencing</keyword>
<keyword id="KW-0539">Nucleus</keyword>
<keyword id="KW-1185">Reference proteome</keyword>
<comment type="function">
    <text>Non catalytic subunit of RNase H2, an endonuclease that specifically degrades the RNA of RNA:DNA hybrids. Participates in DNA replication, possibly by mediating the removal of lagging-strand Okazaki fragment RNA primers during DNA replication. Mediates the excision of single ribonucleotides from DNA:RNA duplexes.</text>
</comment>
<comment type="subunit">
    <text>The RNase 2 complex is a heterotrimer composed of the catalytic subunit RNH201 and of the non-catalytic subunits RNH202 and RNH203.</text>
</comment>
<comment type="interaction">
    <interactant intactId="EBI-33805">
        <id>Q12338</id>
    </interactant>
    <interactant intactId="EBI-15663">
        <id>P53942</id>
        <label>RNH201</label>
    </interactant>
    <organismsDiffer>false</organismsDiffer>
    <experiments>3</experiments>
</comment>
<comment type="interaction">
    <interactant intactId="EBI-33805">
        <id>Q12338</id>
    </interactant>
    <interactant intactId="EBI-33940">
        <id>Q05635</id>
        <label>RNH202</label>
    </interactant>
    <organismsDiffer>false</organismsDiffer>
    <experiments>3</experiments>
</comment>
<comment type="subcellular location">
    <subcellularLocation>
        <location evidence="2">Cytoplasm</location>
    </subcellularLocation>
    <subcellularLocation>
        <location evidence="2">Nucleus</location>
    </subcellularLocation>
</comment>
<comment type="miscellaneous">
    <text evidence="3">Present with 556 molecules/cell in log phase SD medium.</text>
</comment>
<comment type="similarity">
    <text evidence="4">Belongs to the RNase H2 subunit C family. Highly divergent.</text>
</comment>
<reference key="1">
    <citation type="journal article" date="1995" name="Eur. J. Biochem.">
        <title>ACS2, a Saccharomyces cerevisiae gene encoding acetyl-coenzyme A synthetase, essential for growth on glucose.</title>
        <authorList>
            <person name="van den Berg M.A."/>
            <person name="de Steensma H.Y."/>
        </authorList>
    </citation>
    <scope>NUCLEOTIDE SEQUENCE [GENOMIC DNA]</scope>
</reference>
<reference key="2">
    <citation type="journal article" date="1997" name="Nature">
        <title>The nucleotide sequence of Saccharomyces cerevisiae chromosome XII.</title>
        <authorList>
            <person name="Johnston M."/>
            <person name="Hillier L.W."/>
            <person name="Riles L."/>
            <person name="Albermann K."/>
            <person name="Andre B."/>
            <person name="Ansorge W."/>
            <person name="Benes V."/>
            <person name="Brueckner M."/>
            <person name="Delius H."/>
            <person name="Dubois E."/>
            <person name="Duesterhoeft A."/>
            <person name="Entian K.-D."/>
            <person name="Floeth M."/>
            <person name="Goffeau A."/>
            <person name="Hebling U."/>
            <person name="Heumann K."/>
            <person name="Heuss-Neitzel D."/>
            <person name="Hilbert H."/>
            <person name="Hilger F."/>
            <person name="Kleine K."/>
            <person name="Koetter P."/>
            <person name="Louis E.J."/>
            <person name="Messenguy F."/>
            <person name="Mewes H.-W."/>
            <person name="Miosga T."/>
            <person name="Moestl D."/>
            <person name="Mueller-Auer S."/>
            <person name="Nentwich U."/>
            <person name="Obermaier B."/>
            <person name="Piravandi E."/>
            <person name="Pohl T.M."/>
            <person name="Portetelle D."/>
            <person name="Purnelle B."/>
            <person name="Rechmann S."/>
            <person name="Rieger M."/>
            <person name="Rinke M."/>
            <person name="Rose M."/>
            <person name="Scharfe M."/>
            <person name="Scherens B."/>
            <person name="Scholler P."/>
            <person name="Schwager C."/>
            <person name="Schwarz S."/>
            <person name="Underwood A.P."/>
            <person name="Urrestarazu L.A."/>
            <person name="Vandenbol M."/>
            <person name="Verhasselt P."/>
            <person name="Vierendeels F."/>
            <person name="Voet M."/>
            <person name="Volckaert G."/>
            <person name="Voss H."/>
            <person name="Wambutt R."/>
            <person name="Wedler E."/>
            <person name="Wedler H."/>
            <person name="Zimmermann F.K."/>
            <person name="Zollner A."/>
            <person name="Hani J."/>
            <person name="Hoheisel J.D."/>
        </authorList>
    </citation>
    <scope>NUCLEOTIDE SEQUENCE [LARGE SCALE GENOMIC DNA]</scope>
    <source>
        <strain>ATCC 204508 / S288c</strain>
    </source>
</reference>
<reference key="3">
    <citation type="journal article" date="2014" name="G3 (Bethesda)">
        <title>The reference genome sequence of Saccharomyces cerevisiae: Then and now.</title>
        <authorList>
            <person name="Engel S.R."/>
            <person name="Dietrich F.S."/>
            <person name="Fisk D.G."/>
            <person name="Binkley G."/>
            <person name="Balakrishnan R."/>
            <person name="Costanzo M.C."/>
            <person name="Dwight S.S."/>
            <person name="Hitz B.C."/>
            <person name="Karra K."/>
            <person name="Nash R.S."/>
            <person name="Weng S."/>
            <person name="Wong E.D."/>
            <person name="Lloyd P."/>
            <person name="Skrzypek M.S."/>
            <person name="Miyasato S.R."/>
            <person name="Simison M."/>
            <person name="Cherry J.M."/>
        </authorList>
    </citation>
    <scope>GENOME REANNOTATION</scope>
    <source>
        <strain>ATCC 204508 / S288c</strain>
    </source>
</reference>
<reference key="4">
    <citation type="journal article" date="2007" name="Genome Res.">
        <title>Approaching a complete repository of sequence-verified protein-encoding clones for Saccharomyces cerevisiae.</title>
        <authorList>
            <person name="Hu Y."/>
            <person name="Rolfs A."/>
            <person name="Bhullar B."/>
            <person name="Murthy T.V.S."/>
            <person name="Zhu C."/>
            <person name="Berger M.F."/>
            <person name="Camargo A.A."/>
            <person name="Kelley F."/>
            <person name="McCarron S."/>
            <person name="Jepson D."/>
            <person name="Richardson A."/>
            <person name="Raphael J."/>
            <person name="Moreira D."/>
            <person name="Taycher E."/>
            <person name="Zuo D."/>
            <person name="Mohr S."/>
            <person name="Kane M.F."/>
            <person name="Williamson J."/>
            <person name="Simpson A.J.G."/>
            <person name="Bulyk M.L."/>
            <person name="Harlow E."/>
            <person name="Marsischky G."/>
            <person name="Kolodner R.D."/>
            <person name="LaBaer J."/>
        </authorList>
    </citation>
    <scope>NUCLEOTIDE SEQUENCE [GENOMIC DNA]</scope>
    <source>
        <strain>ATCC 204508 / S288c</strain>
    </source>
</reference>
<reference key="5">
    <citation type="journal article" date="2003" name="Nature">
        <title>Global analysis of protein localization in budding yeast.</title>
        <authorList>
            <person name="Huh W.-K."/>
            <person name="Falvo J.V."/>
            <person name="Gerke L.C."/>
            <person name="Carroll A.S."/>
            <person name="Howson R.W."/>
            <person name="Weissman J.S."/>
            <person name="O'Shea E.K."/>
        </authorList>
    </citation>
    <scope>SUBCELLULAR LOCATION [LARGE SCALE ANALYSIS]</scope>
</reference>
<reference key="6">
    <citation type="journal article" date="2003" name="Nature">
        <title>Global analysis of protein expression in yeast.</title>
        <authorList>
            <person name="Ghaemmaghami S."/>
            <person name="Huh W.-K."/>
            <person name="Bower K."/>
            <person name="Howson R.W."/>
            <person name="Belle A."/>
            <person name="Dephoure N."/>
            <person name="O'Shea E.K."/>
            <person name="Weissman J.S."/>
        </authorList>
    </citation>
    <scope>LEVEL OF PROTEIN EXPRESSION [LARGE SCALE ANALYSIS]</scope>
</reference>
<reference key="7">
    <citation type="journal article" date="2004" name="Nucleic Acids Res.">
        <title>RNase H2 of Saccharomyces cerevisiae is a complex of three proteins.</title>
        <authorList>
            <person name="Jeong H.-S."/>
            <person name="Backlund P.S."/>
            <person name="Chen H.-C."/>
            <person name="Karavanov A.A."/>
            <person name="Crouch R.J."/>
        </authorList>
    </citation>
    <scope>PROTEIN SEQUENCE OF N-TERMINUS</scope>
    <scope>IDENTIFICATION BY MASS SPECTROMETRY</scope>
    <scope>INTERACTION WITH RNH201 AND RNH202</scope>
</reference>
<reference key="8">
    <citation type="journal article" date="2004" name="Nucleic Acids Res.">
        <authorList>
            <person name="Jeong H.-S."/>
            <person name="Backlund P.S."/>
            <person name="Chen H.-C."/>
            <person name="Karavanov A.A."/>
            <person name="Crouch R.J."/>
        </authorList>
    </citation>
    <scope>ERRATUM OF PUBMED:14734815</scope>
</reference>
<gene>
    <name type="primary">RNH203</name>
    <name type="ordered locus">YLR154C</name>
</gene>
<protein>
    <recommendedName>
        <fullName>Ribonuclease H2 subunit C</fullName>
        <shortName>RNase H2 subunit C</shortName>
        <shortName>Rnh2C</shortName>
    </recommendedName>
    <alternativeName>
        <fullName>RNase H(203)</fullName>
    </alternativeName>
    <alternativeName>
        <fullName>Ribonuclease HI subunit C</fullName>
    </alternativeName>
</protein>
<accession>Q12338</accession>
<accession>D6VYE9</accession>
<accession>Q6Q5B9</accession>
<sequence>MTKDAVNLDAYTVSFMPFYTEYQGPTEEFKDYKFEDTIYFRGKELKREKSATPSSSDNTTSNTFSNGAILSGNTITGKIVSVNNYEREGTDRNELARLQELISLIDVINQ</sequence>